<dbReference type="EMBL" id="L43967">
    <property type="protein sequence ID" value="AAC71278.2"/>
    <property type="molecule type" value="Genomic_DNA"/>
</dbReference>
<dbReference type="EMBL" id="U01705">
    <property type="protein sequence ID" value="AAB01017.1"/>
    <property type="molecule type" value="Genomic_DNA"/>
</dbReference>
<dbReference type="PIR" id="G64206">
    <property type="entry name" value="G64206"/>
</dbReference>
<dbReference type="RefSeq" id="WP_010869311.1">
    <property type="nucleotide sequence ID" value="NC_000908.2"/>
</dbReference>
<dbReference type="STRING" id="243273.MG_061"/>
<dbReference type="GeneID" id="88282178"/>
<dbReference type="KEGG" id="mge:MG_061"/>
<dbReference type="eggNOG" id="COG2814">
    <property type="taxonomic scope" value="Bacteria"/>
</dbReference>
<dbReference type="HOGENOM" id="CLU_033053_0_0_14"/>
<dbReference type="InParanoid" id="P47307"/>
<dbReference type="OrthoDB" id="399989at2"/>
<dbReference type="BioCyc" id="MGEN243273:G1GJ2-64-MONOMER"/>
<dbReference type="Proteomes" id="UP000000807">
    <property type="component" value="Chromosome"/>
</dbReference>
<dbReference type="GO" id="GO:0005886">
    <property type="term" value="C:plasma membrane"/>
    <property type="evidence" value="ECO:0007669"/>
    <property type="project" value="UniProtKB-SubCell"/>
</dbReference>
<dbReference type="Gene3D" id="1.20.1250.20">
    <property type="entry name" value="MFS general substrate transporter like domains"/>
    <property type="match status" value="1"/>
</dbReference>
<dbReference type="InterPro" id="IPR011699">
    <property type="entry name" value="MFS_Mycoplasma"/>
</dbReference>
<dbReference type="InterPro" id="IPR036259">
    <property type="entry name" value="MFS_trans_sf"/>
</dbReference>
<dbReference type="Pfam" id="PF07672">
    <property type="entry name" value="MFS_Mycoplasma"/>
    <property type="match status" value="1"/>
</dbReference>
<dbReference type="SUPFAM" id="SSF103473">
    <property type="entry name" value="MFS general substrate transporter"/>
    <property type="match status" value="1"/>
</dbReference>
<protein>
    <recommendedName>
        <fullName>Major facilitator superfamily transporter MG061</fullName>
    </recommendedName>
</protein>
<keyword id="KW-1003">Cell membrane</keyword>
<keyword id="KW-0472">Membrane</keyword>
<keyword id="KW-1185">Reference proteome</keyword>
<keyword id="KW-0812">Transmembrane</keyword>
<keyword id="KW-1133">Transmembrane helix</keyword>
<keyword id="KW-0813">Transport</keyword>
<comment type="subcellular location">
    <subcellularLocation>
        <location evidence="3">Cell membrane</location>
        <topology evidence="3">Multi-pass membrane protein</topology>
    </subcellularLocation>
</comment>
<comment type="disruption phenotype">
    <text evidence="2">Not essential, it can be deleted.</text>
</comment>
<comment type="similarity">
    <text evidence="3">Belongs to the major facilitator superfamily.</text>
</comment>
<feature type="chain" id="PRO_0000210404" description="Major facilitator superfamily transporter MG061">
    <location>
        <begin position="1"/>
        <end position="567"/>
    </location>
</feature>
<feature type="transmembrane region" description="Helical" evidence="1">
    <location>
        <begin position="15"/>
        <end position="35"/>
    </location>
</feature>
<feature type="transmembrane region" description="Helical" evidence="1">
    <location>
        <begin position="78"/>
        <end position="98"/>
    </location>
</feature>
<feature type="transmembrane region" description="Helical" evidence="1">
    <location>
        <begin position="104"/>
        <end position="124"/>
    </location>
</feature>
<feature type="transmembrane region" description="Helical" evidence="1">
    <location>
        <begin position="193"/>
        <end position="213"/>
    </location>
</feature>
<feature type="transmembrane region" description="Helical" evidence="1">
    <location>
        <begin position="230"/>
        <end position="250"/>
    </location>
</feature>
<feature type="transmembrane region" description="Helical" evidence="1">
    <location>
        <begin position="264"/>
        <end position="284"/>
    </location>
</feature>
<feature type="transmembrane region" description="Helical" evidence="1">
    <location>
        <begin position="321"/>
        <end position="341"/>
    </location>
</feature>
<feature type="transmembrane region" description="Helical" evidence="1">
    <location>
        <begin position="363"/>
        <end position="383"/>
    </location>
</feature>
<feature type="transmembrane region" description="Helical" evidence="1">
    <location>
        <begin position="405"/>
        <end position="425"/>
    </location>
</feature>
<feature type="transmembrane region" description="Helical" evidence="1">
    <location>
        <begin position="426"/>
        <end position="446"/>
    </location>
</feature>
<feature type="transmembrane region" description="Helical" evidence="1">
    <location>
        <begin position="462"/>
        <end position="482"/>
    </location>
</feature>
<feature type="transmembrane region" description="Helical" evidence="1">
    <location>
        <begin position="503"/>
        <end position="523"/>
    </location>
</feature>
<name>Y061_MYCGE</name>
<organism>
    <name type="scientific">Mycoplasma genitalium (strain ATCC 33530 / DSM 19775 / NCTC 10195 / G37)</name>
    <name type="common">Mycoplasmoides genitalium</name>
    <dbReference type="NCBI Taxonomy" id="243273"/>
    <lineage>
        <taxon>Bacteria</taxon>
        <taxon>Bacillati</taxon>
        <taxon>Mycoplasmatota</taxon>
        <taxon>Mycoplasmoidales</taxon>
        <taxon>Mycoplasmoidaceae</taxon>
        <taxon>Mycoplasmoides</taxon>
    </lineage>
</organism>
<evidence type="ECO:0000255" key="1"/>
<evidence type="ECO:0000269" key="2">
    <source>
    </source>
</evidence>
<evidence type="ECO:0000305" key="3"/>
<reference key="1">
    <citation type="journal article" date="1995" name="Science">
        <title>The minimal gene complement of Mycoplasma genitalium.</title>
        <authorList>
            <person name="Fraser C.M."/>
            <person name="Gocayne J.D."/>
            <person name="White O."/>
            <person name="Adams M.D."/>
            <person name="Clayton R.A."/>
            <person name="Fleischmann R.D."/>
            <person name="Bult C.J."/>
            <person name="Kerlavage A.R."/>
            <person name="Sutton G.G."/>
            <person name="Kelley J.M."/>
            <person name="Fritchman J.L."/>
            <person name="Weidman J.F."/>
            <person name="Small K.V."/>
            <person name="Sandusky M."/>
            <person name="Fuhrmann J.L."/>
            <person name="Nguyen D.T."/>
            <person name="Utterback T.R."/>
            <person name="Saudek D.M."/>
            <person name="Phillips C.A."/>
            <person name="Merrick J.M."/>
            <person name="Tomb J.-F."/>
            <person name="Dougherty B.A."/>
            <person name="Bott K.F."/>
            <person name="Hu P.-C."/>
            <person name="Lucier T.S."/>
            <person name="Peterson S.N."/>
            <person name="Smith H.O."/>
            <person name="Hutchison C.A. III"/>
            <person name="Venter J.C."/>
        </authorList>
    </citation>
    <scope>NUCLEOTIDE SEQUENCE [LARGE SCALE GENOMIC DNA]</scope>
    <source>
        <strain>ATCC 33530 / DSM 19775 / NCTC 10195 / G37</strain>
    </source>
</reference>
<reference key="2">
    <citation type="journal article" date="1993" name="J. Bacteriol.">
        <title>A survey of the Mycoplasma genitalium genome by using random sequencing.</title>
        <authorList>
            <person name="Peterson S.N."/>
            <person name="Hu P.-C."/>
            <person name="Bott K.F."/>
            <person name="Hutchison C.A. III"/>
        </authorList>
    </citation>
    <scope>NUCLEOTIDE SEQUENCE [GENOMIC DNA] OF 311-530</scope>
    <source>
        <strain>ATCC 33530 / DSM 19775 / NCTC 10195 / G37</strain>
    </source>
</reference>
<reference key="3">
    <citation type="journal article" date="2006" name="Proc. Natl. Acad. Sci. U.S.A.">
        <title>Essential genes of a minimal bacterium.</title>
        <authorList>
            <person name="Glass J.I."/>
            <person name="Assad-Garcia N."/>
            <person name="Alperovich N."/>
            <person name="Yooseph S."/>
            <person name="Lewis M.R."/>
            <person name="Maruf M."/>
            <person name="Hutchison C.A. III"/>
            <person name="Smith H.O."/>
            <person name="Venter J.C."/>
        </authorList>
    </citation>
    <scope>SEQUENCE REVISION TO 419</scope>
    <scope>DISRUPTION PHENOTYPE</scope>
    <source>
        <strain>ATCC 33530 / DSM 19775 / NCTC 10195 / G37</strain>
    </source>
</reference>
<proteinExistence type="inferred from homology"/>
<gene>
    <name type="ordered locus">MG061</name>
</gene>
<sequence length="567" mass="62822">MENKSQKKVSDLKLITLWIIVIFGYLLFVVEWFVIDRISGKPTGILTQSTTTLPQYSGWLSSFFTENAGQIATSSTNWTITLLRAVGSILCGVVVLKFGYRYAVLIMMGIMCVCFPFLIIGDPLNGHNQLTLLRPLSDSVKTQLSSLSSNLQVGQLLGPVMINGKTMLADGTSVELIKGLDGNSIGTAASITGYALFIIFRSTIAIGGTTLVVYTQPAIANLSSNRKKSILSNANLWGFNIGIAVVFTPFLFEQVQQVASQYWVYIMTVMILVVFANLCLFLWFESKIDHIFPQKQTKENMSLTTQPKSIDILKNKTTWKLIGVYGIVLILIVNPLTPAWFSILQTVSPSGSNGLISTGVYTTGLATLAIFWVIGYALGFVVFSPFNKTIYDKKRWMHFLLTANIVVLLIIIMFAATLGIGSAAGFALISIFSFIGGAFAWSLSSSNLILPYEFKDYKKNELPILFGFCWGFGYIAYTLFDITQSVFLQAPVLIQGKGTSILPGVIVSIVFFLGLIALANLIVKFFPACWIKDGDQLVQEMTRKWKLNEWQFVIANKQKNRYSELLK</sequence>
<accession>P47307</accession>